<evidence type="ECO:0000255" key="1">
    <source>
        <dbReference type="PROSITE-ProRule" id="PRU00701"/>
    </source>
</evidence>
<evidence type="ECO:0000256" key="2">
    <source>
        <dbReference type="SAM" id="MobiDB-lite"/>
    </source>
</evidence>
<evidence type="ECO:0000269" key="3">
    <source>
    </source>
</evidence>
<evidence type="ECO:0000305" key="4"/>
<dbReference type="EMBL" id="DP000009">
    <property type="protein sequence ID" value="ABF99227.1"/>
    <property type="molecule type" value="Genomic_DNA"/>
</dbReference>
<dbReference type="EMBL" id="AP008209">
    <property type="protein sequence ID" value="BAF13398.1"/>
    <property type="status" value="ALT_INIT"/>
    <property type="molecule type" value="Genomic_DNA"/>
</dbReference>
<dbReference type="EMBL" id="AP014959">
    <property type="protein sequence ID" value="BAS86727.1"/>
    <property type="molecule type" value="Genomic_DNA"/>
</dbReference>
<dbReference type="EMBL" id="AK242788">
    <property type="protein sequence ID" value="BAH01343.1"/>
    <property type="molecule type" value="mRNA"/>
</dbReference>
<dbReference type="EMBL" id="AB071806">
    <property type="protein sequence ID" value="BAB92953.1"/>
    <property type="molecule type" value="mRNA"/>
</dbReference>
<dbReference type="RefSeq" id="XP_015629084.1">
    <property type="nucleotide sequence ID" value="XM_015773598.1"/>
</dbReference>
<dbReference type="SMR" id="Q10CE8"/>
<dbReference type="FunCoup" id="Q10CE8">
    <property type="interactions" value="993"/>
</dbReference>
<dbReference type="STRING" id="39947.Q10CE8"/>
<dbReference type="PaxDb" id="39947-Q10CE8"/>
<dbReference type="EnsemblPlants" id="Os03t0785800-01">
    <property type="protein sequence ID" value="Os03t0785800-01"/>
    <property type="gene ID" value="Os03g0785800"/>
</dbReference>
<dbReference type="Gramene" id="Os03t0785800-01">
    <property type="protein sequence ID" value="Os03t0785800-01"/>
    <property type="gene ID" value="Os03g0785800"/>
</dbReference>
<dbReference type="KEGG" id="dosa:Os03g0785800"/>
<dbReference type="eggNOG" id="ENOG502QQFU">
    <property type="taxonomic scope" value="Eukaryota"/>
</dbReference>
<dbReference type="HOGENOM" id="CLU_036572_1_0_1"/>
<dbReference type="InParanoid" id="Q10CE8"/>
<dbReference type="OMA" id="RQWMAPS"/>
<dbReference type="OrthoDB" id="688758at2759"/>
<dbReference type="Proteomes" id="UP000000763">
    <property type="component" value="Chromosome 3"/>
</dbReference>
<dbReference type="Proteomes" id="UP000059680">
    <property type="component" value="Chromosome 3"/>
</dbReference>
<dbReference type="GO" id="GO:0005634">
    <property type="term" value="C:nucleus"/>
    <property type="evidence" value="ECO:0000318"/>
    <property type="project" value="GO_Central"/>
</dbReference>
<dbReference type="GO" id="GO:0003700">
    <property type="term" value="F:DNA-binding transcription factor activity"/>
    <property type="evidence" value="ECO:0000318"/>
    <property type="project" value="GO_Central"/>
</dbReference>
<dbReference type="GO" id="GO:0043565">
    <property type="term" value="F:sequence-specific DNA binding"/>
    <property type="evidence" value="ECO:0000318"/>
    <property type="project" value="GO_Central"/>
</dbReference>
<dbReference type="GO" id="GO:2000032">
    <property type="term" value="P:regulation of secondary shoot formation"/>
    <property type="evidence" value="ECO:0000318"/>
    <property type="project" value="GO_Central"/>
</dbReference>
<dbReference type="InterPro" id="IPR017887">
    <property type="entry name" value="TF_TCP_subgr"/>
</dbReference>
<dbReference type="InterPro" id="IPR005333">
    <property type="entry name" value="Transcription_factor_TCP"/>
</dbReference>
<dbReference type="PANTHER" id="PTHR31072:SF114">
    <property type="entry name" value="TRANSCRIPTION FACTOR PCF6"/>
    <property type="match status" value="1"/>
</dbReference>
<dbReference type="PANTHER" id="PTHR31072">
    <property type="entry name" value="TRANSCRIPTION FACTOR TCP4-RELATED"/>
    <property type="match status" value="1"/>
</dbReference>
<dbReference type="Pfam" id="PF03634">
    <property type="entry name" value="TCP"/>
    <property type="match status" value="1"/>
</dbReference>
<dbReference type="PROSITE" id="PS51369">
    <property type="entry name" value="TCP"/>
    <property type="match status" value="1"/>
</dbReference>
<sequence>MEAAVGDGEGGGGGGGRGKRGRGGGGGEMVEAVWGQTGSTASRIYRVRATGGKDRHSKVYTAKGIRDRRVRLSVATAIQFYDLQDRLGFDQPSKAIEWLINAASPAIDTLPSLDPAAFAAIPHAAADAAPTRRRSQQQQQQLSNKSGCSSTSETSKGSDKEVTVASAPAQAASFTELLIAGVAASSAGGGAIGNGADCVGIAHPGKGGAEGASTYGFSAASSFGDAPPIGMVPAPPFNFSAPGADMAAHYSLAQDQLAAPPPPAGGDYNLNFSMSSGFLGANRGTLQSNSPSNMSGHHHHHHQQQLQRLDGSTISFLLGHAAAAAHPAASEGQITSTAALQLWDGFRHSGMKEKSKN</sequence>
<name>PCF6_ORYSJ</name>
<gene>
    <name type="primary">PCF6</name>
    <name type="ordered locus">Os03g0785800</name>
    <name type="ordered locus">LOC_Os03g57190</name>
</gene>
<protein>
    <recommendedName>
        <fullName>Transcription factor PCF6</fullName>
    </recommendedName>
</protein>
<reference key="1">
    <citation type="journal article" date="2005" name="Genome Res.">
        <title>Sequence, annotation, and analysis of synteny between rice chromosome 3 and diverged grass species.</title>
        <authorList>
            <consortium name="The rice chromosome 3 sequencing consortium"/>
            <person name="Buell C.R."/>
            <person name="Yuan Q."/>
            <person name="Ouyang S."/>
            <person name="Liu J."/>
            <person name="Zhu W."/>
            <person name="Wang A."/>
            <person name="Maiti R."/>
            <person name="Haas B."/>
            <person name="Wortman J."/>
            <person name="Pertea M."/>
            <person name="Jones K.M."/>
            <person name="Kim M."/>
            <person name="Overton L."/>
            <person name="Tsitrin T."/>
            <person name="Fadrosh D."/>
            <person name="Bera J."/>
            <person name="Weaver B."/>
            <person name="Jin S."/>
            <person name="Johri S."/>
            <person name="Reardon M."/>
            <person name="Webb K."/>
            <person name="Hill J."/>
            <person name="Moffat K."/>
            <person name="Tallon L."/>
            <person name="Van Aken S."/>
            <person name="Lewis M."/>
            <person name="Utterback T."/>
            <person name="Feldblyum T."/>
            <person name="Zismann V."/>
            <person name="Iobst S."/>
            <person name="Hsiao J."/>
            <person name="de Vazeille A.R."/>
            <person name="Salzberg S.L."/>
            <person name="White O."/>
            <person name="Fraser C.M."/>
            <person name="Yu Y."/>
            <person name="Kim H."/>
            <person name="Rambo T."/>
            <person name="Currie J."/>
            <person name="Collura K."/>
            <person name="Kernodle-Thompson S."/>
            <person name="Wei F."/>
            <person name="Kudrna K."/>
            <person name="Ammiraju J.S.S."/>
            <person name="Luo M."/>
            <person name="Goicoechea J.L."/>
            <person name="Wing R.A."/>
            <person name="Henry D."/>
            <person name="Oates R."/>
            <person name="Palmer M."/>
            <person name="Pries G."/>
            <person name="Saski C."/>
            <person name="Simmons J."/>
            <person name="Soderlund C."/>
            <person name="Nelson W."/>
            <person name="de la Bastide M."/>
            <person name="Spiegel L."/>
            <person name="Nascimento L."/>
            <person name="Huang E."/>
            <person name="Preston R."/>
            <person name="Zutavern T."/>
            <person name="Palmer L."/>
            <person name="O'Shaughnessy A."/>
            <person name="Dike S."/>
            <person name="McCombie W.R."/>
            <person name="Minx P."/>
            <person name="Cordum H."/>
            <person name="Wilson R."/>
            <person name="Jin W."/>
            <person name="Lee H.R."/>
            <person name="Jiang J."/>
            <person name="Jackson S."/>
        </authorList>
    </citation>
    <scope>NUCLEOTIDE SEQUENCE [LARGE SCALE GENOMIC DNA]</scope>
    <source>
        <strain>cv. Nipponbare</strain>
    </source>
</reference>
<reference key="2">
    <citation type="journal article" date="2005" name="Nature">
        <title>The map-based sequence of the rice genome.</title>
        <authorList>
            <consortium name="International rice genome sequencing project (IRGSP)"/>
        </authorList>
    </citation>
    <scope>NUCLEOTIDE SEQUENCE [LARGE SCALE GENOMIC DNA]</scope>
    <source>
        <strain>cv. Nipponbare</strain>
    </source>
</reference>
<reference key="3">
    <citation type="journal article" date="2008" name="Nucleic Acids Res.">
        <title>The rice annotation project database (RAP-DB): 2008 update.</title>
        <authorList>
            <consortium name="The rice annotation project (RAP)"/>
        </authorList>
    </citation>
    <scope>GENOME REANNOTATION</scope>
    <source>
        <strain>cv. Nipponbare</strain>
    </source>
</reference>
<reference key="4">
    <citation type="journal article" date="2013" name="Rice">
        <title>Improvement of the Oryza sativa Nipponbare reference genome using next generation sequence and optical map data.</title>
        <authorList>
            <person name="Kawahara Y."/>
            <person name="de la Bastide M."/>
            <person name="Hamilton J.P."/>
            <person name="Kanamori H."/>
            <person name="McCombie W.R."/>
            <person name="Ouyang S."/>
            <person name="Schwartz D.C."/>
            <person name="Tanaka T."/>
            <person name="Wu J."/>
            <person name="Zhou S."/>
            <person name="Childs K.L."/>
            <person name="Davidson R.M."/>
            <person name="Lin H."/>
            <person name="Quesada-Ocampo L."/>
            <person name="Vaillancourt B."/>
            <person name="Sakai H."/>
            <person name="Lee S.S."/>
            <person name="Kim J."/>
            <person name="Numa H."/>
            <person name="Itoh T."/>
            <person name="Buell C.R."/>
            <person name="Matsumoto T."/>
        </authorList>
    </citation>
    <scope>GENOME REANNOTATION</scope>
    <source>
        <strain>cv. Nipponbare</strain>
    </source>
</reference>
<reference key="5">
    <citation type="submission" date="2006-10" db="EMBL/GenBank/DDBJ databases">
        <title>Oryza sativa full length cDNA.</title>
        <authorList>
            <consortium name="The rice full-length cDNA consortium"/>
        </authorList>
    </citation>
    <scope>NUCLEOTIDE SEQUENCE [LARGE SCALE MRNA]</scope>
    <source>
        <strain>cv. Nipponbare</strain>
    </source>
</reference>
<reference key="6">
    <citation type="journal article" date="2002" name="Plant J.">
        <title>DNA binding and dimerization specificity and potential targets for the TCP protein family.</title>
        <authorList>
            <person name="Kosugi S."/>
            <person name="Ohashi Y."/>
        </authorList>
    </citation>
    <scope>NUCLEOTIDE SEQUENCE [MRNA] OF 43-357</scope>
    <scope>FUNCTION</scope>
    <source>
        <strain>cv. Nipponbare</strain>
    </source>
</reference>
<keyword id="KW-0010">Activator</keyword>
<keyword id="KW-0217">Developmental protein</keyword>
<keyword id="KW-0238">DNA-binding</keyword>
<keyword id="KW-0539">Nucleus</keyword>
<keyword id="KW-1185">Reference proteome</keyword>
<keyword id="KW-0804">Transcription</keyword>
<keyword id="KW-0805">Transcription regulation</keyword>
<proteinExistence type="evidence at transcript level"/>
<comment type="function">
    <text evidence="3">Transcription activator. Binds the promoter core sequence 5'-GGNCC-3'.</text>
</comment>
<comment type="subunit">
    <text evidence="4">Forms homodimers and heterodimers.</text>
</comment>
<comment type="subcellular location">
    <subcellularLocation>
        <location evidence="4">Nucleus</location>
    </subcellularLocation>
</comment>
<comment type="sequence caution" evidence="4">
    <conflict type="erroneous initiation">
        <sequence resource="EMBL-CDS" id="BAF13398"/>
    </conflict>
</comment>
<organism>
    <name type="scientific">Oryza sativa subsp. japonica</name>
    <name type="common">Rice</name>
    <dbReference type="NCBI Taxonomy" id="39947"/>
    <lineage>
        <taxon>Eukaryota</taxon>
        <taxon>Viridiplantae</taxon>
        <taxon>Streptophyta</taxon>
        <taxon>Embryophyta</taxon>
        <taxon>Tracheophyta</taxon>
        <taxon>Spermatophyta</taxon>
        <taxon>Magnoliopsida</taxon>
        <taxon>Liliopsida</taxon>
        <taxon>Poales</taxon>
        <taxon>Poaceae</taxon>
        <taxon>BOP clade</taxon>
        <taxon>Oryzoideae</taxon>
        <taxon>Oryzeae</taxon>
        <taxon>Oryzinae</taxon>
        <taxon>Oryza</taxon>
        <taxon>Oryza sativa</taxon>
    </lineage>
</organism>
<feature type="chain" id="PRO_0000330809" description="Transcription factor PCF6">
    <location>
        <begin position="1"/>
        <end position="357"/>
    </location>
</feature>
<feature type="domain" description="TCP" evidence="1">
    <location>
        <begin position="52"/>
        <end position="110"/>
    </location>
</feature>
<feature type="region of interest" description="Disordered" evidence="2">
    <location>
        <begin position="1"/>
        <end position="29"/>
    </location>
</feature>
<feature type="region of interest" description="Disordered" evidence="2">
    <location>
        <begin position="125"/>
        <end position="162"/>
    </location>
</feature>
<feature type="region of interest" description="Disordered" evidence="2">
    <location>
        <begin position="281"/>
        <end position="307"/>
    </location>
</feature>
<feature type="compositionally biased region" description="Gly residues" evidence="2">
    <location>
        <begin position="7"/>
        <end position="16"/>
    </location>
</feature>
<feature type="compositionally biased region" description="Polar residues" evidence="2">
    <location>
        <begin position="142"/>
        <end position="155"/>
    </location>
</feature>
<feature type="compositionally biased region" description="Polar residues" evidence="2">
    <location>
        <begin position="284"/>
        <end position="295"/>
    </location>
</feature>
<feature type="sequence conflict" description="In Ref. 6; BAB92953." evidence="4" ref="6">
    <original>RIY</original>
    <variation>GTS</variation>
    <location>
        <begin position="43"/>
        <end position="45"/>
    </location>
</feature>
<accession>Q10CE8</accession>
<accession>B7F9P5</accession>
<accession>Q0DMZ0</accession>
<accession>Q8LT06</accession>